<keyword id="KW-1185">Reference proteome</keyword>
<protein>
    <recommendedName>
        <fullName>Uncharacterized protein 240R</fullName>
    </recommendedName>
</protein>
<proteinExistence type="predicted"/>
<organism>
    <name type="scientific">Invertebrate iridescent virus 6</name>
    <name type="common">IIV-6</name>
    <name type="synonym">Chilo iridescent virus</name>
    <dbReference type="NCBI Taxonomy" id="176652"/>
    <lineage>
        <taxon>Viruses</taxon>
        <taxon>Varidnaviria</taxon>
        <taxon>Bamfordvirae</taxon>
        <taxon>Nucleocytoviricota</taxon>
        <taxon>Megaviricetes</taxon>
        <taxon>Pimascovirales</taxon>
        <taxon>Iridoviridae</taxon>
        <taxon>Betairidovirinae</taxon>
        <taxon>Iridovirus</taxon>
    </lineage>
</organism>
<feature type="chain" id="PRO_0000377827" description="Uncharacterized protein 240R">
    <location>
        <begin position="1"/>
        <end position="62"/>
    </location>
</feature>
<sequence length="62" mass="7130">MTSRGHLRRAPCCYAFKSATSHQRTRTSLCLASPPAPHCLLLYSHRCLTYFTVDYELSFFCL</sequence>
<gene>
    <name type="ORF">IIV6-240R</name>
</gene>
<accession>Q91FT2</accession>
<organismHost>
    <name type="scientific">Acheta domesticus</name>
    <name type="common">House cricket</name>
    <dbReference type="NCBI Taxonomy" id="6997"/>
</organismHost>
<organismHost>
    <name type="scientific">Chilo suppressalis</name>
    <name type="common">Asiatic rice borer moth</name>
    <dbReference type="NCBI Taxonomy" id="168631"/>
</organismHost>
<organismHost>
    <name type="scientific">Gryllus bimaculatus</name>
    <name type="common">Two-spotted cricket</name>
    <dbReference type="NCBI Taxonomy" id="6999"/>
</organismHost>
<organismHost>
    <name type="scientific">Gryllus campestris</name>
    <dbReference type="NCBI Taxonomy" id="58607"/>
</organismHost>
<organismHost>
    <name type="scientific">Spodoptera frugiperda</name>
    <name type="common">Fall armyworm</name>
    <dbReference type="NCBI Taxonomy" id="7108"/>
</organismHost>
<name>240R_IIV6</name>
<dbReference type="EMBL" id="AF303741">
    <property type="protein sequence ID" value="AAK82101.1"/>
    <property type="molecule type" value="Genomic_DNA"/>
</dbReference>
<dbReference type="RefSeq" id="NP_149703.1">
    <property type="nucleotide sequence ID" value="NC_003038.1"/>
</dbReference>
<dbReference type="KEGG" id="vg:1732997"/>
<dbReference type="Proteomes" id="UP000001359">
    <property type="component" value="Genome"/>
</dbReference>
<reference key="1">
    <citation type="journal article" date="2001" name="Virology">
        <title>Analysis of the first complete DNA sequence of an invertebrate iridovirus: coding strategy of the genome of Chilo iridescent virus.</title>
        <authorList>
            <person name="Jakob N.J."/>
            <person name="Mueller K."/>
            <person name="Bahr U."/>
            <person name="Darai G."/>
        </authorList>
    </citation>
    <scope>NUCLEOTIDE SEQUENCE [LARGE SCALE GENOMIC DNA]</scope>
</reference>
<reference key="2">
    <citation type="journal article" date="2007" name="Virol. J.">
        <title>Comparative genomic analysis of the family Iridoviridae: re-annotating and defining the core set of iridovirus genes.</title>
        <authorList>
            <person name="Eaton H.E."/>
            <person name="Metcalf J."/>
            <person name="Penny E."/>
            <person name="Tcherepanov V."/>
            <person name="Upton C."/>
            <person name="Brunetti C.R."/>
        </authorList>
    </citation>
    <scope>GENOME REANNOTATION</scope>
</reference>